<comment type="catalytic activity">
    <reaction evidence="1">
        <text>CMP + ATP = CDP + ADP</text>
        <dbReference type="Rhea" id="RHEA:11600"/>
        <dbReference type="ChEBI" id="CHEBI:30616"/>
        <dbReference type="ChEBI" id="CHEBI:58069"/>
        <dbReference type="ChEBI" id="CHEBI:60377"/>
        <dbReference type="ChEBI" id="CHEBI:456216"/>
        <dbReference type="EC" id="2.7.4.25"/>
    </reaction>
</comment>
<comment type="catalytic activity">
    <reaction evidence="1">
        <text>dCMP + ATP = dCDP + ADP</text>
        <dbReference type="Rhea" id="RHEA:25094"/>
        <dbReference type="ChEBI" id="CHEBI:30616"/>
        <dbReference type="ChEBI" id="CHEBI:57566"/>
        <dbReference type="ChEBI" id="CHEBI:58593"/>
        <dbReference type="ChEBI" id="CHEBI:456216"/>
        <dbReference type="EC" id="2.7.4.25"/>
    </reaction>
</comment>
<comment type="subcellular location">
    <subcellularLocation>
        <location evidence="1">Cytoplasm</location>
    </subcellularLocation>
</comment>
<comment type="similarity">
    <text evidence="1">Belongs to the cytidylate kinase family. Type 1 subfamily.</text>
</comment>
<dbReference type="EC" id="2.7.4.25" evidence="1"/>
<dbReference type="EMBL" id="CP000414">
    <property type="protein sequence ID" value="ABJ62390.1"/>
    <property type="molecule type" value="Genomic_DNA"/>
</dbReference>
<dbReference type="SMR" id="Q03WN2"/>
<dbReference type="EnsemblBacteria" id="ABJ62390">
    <property type="protein sequence ID" value="ABJ62390"/>
    <property type="gene ID" value="LEUM_1293"/>
</dbReference>
<dbReference type="KEGG" id="lme:LEUM_1293"/>
<dbReference type="eggNOG" id="COG0283">
    <property type="taxonomic scope" value="Bacteria"/>
</dbReference>
<dbReference type="HOGENOM" id="CLU_079959_0_2_9"/>
<dbReference type="Proteomes" id="UP000000362">
    <property type="component" value="Chromosome"/>
</dbReference>
<dbReference type="GO" id="GO:0005829">
    <property type="term" value="C:cytosol"/>
    <property type="evidence" value="ECO:0007669"/>
    <property type="project" value="TreeGrafter"/>
</dbReference>
<dbReference type="GO" id="GO:0005524">
    <property type="term" value="F:ATP binding"/>
    <property type="evidence" value="ECO:0007669"/>
    <property type="project" value="UniProtKB-UniRule"/>
</dbReference>
<dbReference type="GO" id="GO:0036430">
    <property type="term" value="F:CMP kinase activity"/>
    <property type="evidence" value="ECO:0007669"/>
    <property type="project" value="RHEA"/>
</dbReference>
<dbReference type="GO" id="GO:0036431">
    <property type="term" value="F:dCMP kinase activity"/>
    <property type="evidence" value="ECO:0007669"/>
    <property type="project" value="RHEA"/>
</dbReference>
<dbReference type="GO" id="GO:0015949">
    <property type="term" value="P:nucleobase-containing small molecule interconversion"/>
    <property type="evidence" value="ECO:0007669"/>
    <property type="project" value="TreeGrafter"/>
</dbReference>
<dbReference type="GO" id="GO:0006220">
    <property type="term" value="P:pyrimidine nucleotide metabolic process"/>
    <property type="evidence" value="ECO:0007669"/>
    <property type="project" value="UniProtKB-UniRule"/>
</dbReference>
<dbReference type="CDD" id="cd02020">
    <property type="entry name" value="CMPK"/>
    <property type="match status" value="1"/>
</dbReference>
<dbReference type="FunFam" id="3.40.50.300:FF:000484">
    <property type="entry name" value="Cytidylate kinase"/>
    <property type="match status" value="1"/>
</dbReference>
<dbReference type="Gene3D" id="3.40.50.300">
    <property type="entry name" value="P-loop containing nucleotide triphosphate hydrolases"/>
    <property type="match status" value="1"/>
</dbReference>
<dbReference type="HAMAP" id="MF_00238">
    <property type="entry name" value="Cytidyl_kinase_type1"/>
    <property type="match status" value="1"/>
</dbReference>
<dbReference type="InterPro" id="IPR003136">
    <property type="entry name" value="Cytidylate_kin"/>
</dbReference>
<dbReference type="InterPro" id="IPR011994">
    <property type="entry name" value="Cytidylate_kinase_dom"/>
</dbReference>
<dbReference type="InterPro" id="IPR027417">
    <property type="entry name" value="P-loop_NTPase"/>
</dbReference>
<dbReference type="NCBIfam" id="TIGR00017">
    <property type="entry name" value="cmk"/>
    <property type="match status" value="1"/>
</dbReference>
<dbReference type="PANTHER" id="PTHR21299:SF2">
    <property type="entry name" value="CYTIDYLATE KINASE"/>
    <property type="match status" value="1"/>
</dbReference>
<dbReference type="PANTHER" id="PTHR21299">
    <property type="entry name" value="CYTIDYLATE KINASE/PANTOATE-BETA-ALANINE LIGASE"/>
    <property type="match status" value="1"/>
</dbReference>
<dbReference type="Pfam" id="PF02224">
    <property type="entry name" value="Cytidylate_kin"/>
    <property type="match status" value="1"/>
</dbReference>
<dbReference type="SUPFAM" id="SSF52540">
    <property type="entry name" value="P-loop containing nucleoside triphosphate hydrolases"/>
    <property type="match status" value="1"/>
</dbReference>
<proteinExistence type="inferred from homology"/>
<feature type="chain" id="PRO_1000048230" description="Cytidylate kinase">
    <location>
        <begin position="1"/>
        <end position="224"/>
    </location>
</feature>
<feature type="binding site" evidence="1">
    <location>
        <begin position="10"/>
        <end position="18"/>
    </location>
    <ligand>
        <name>ATP</name>
        <dbReference type="ChEBI" id="CHEBI:30616"/>
    </ligand>
</feature>
<sequence length="224" mass="24843">MTNFQVAIDGPASAGKSTIAKILATKLNYVYVDTGAMYRTITLAAKKNGIAYNDEEKIKNLLSQTEIRFEPSTPVQRVFLNDTDVTEEIRSAEVTNNVSVVASFADVRSNLVNRQREIANNNSVIMDGRDIGTTVLPEADVKIFLVASVDERAQRRYKENVAKGMTTDLETLKREIEARDYKDSHRQISPLTQAKDAILVDTTGQSIDDVVAKIANIIENNISF</sequence>
<accession>Q03WN2</accession>
<protein>
    <recommendedName>
        <fullName evidence="1">Cytidylate kinase</fullName>
        <shortName evidence="1">CK</shortName>
        <ecNumber evidence="1">2.7.4.25</ecNumber>
    </recommendedName>
    <alternativeName>
        <fullName evidence="1">Cytidine monophosphate kinase</fullName>
        <shortName evidence="1">CMP kinase</shortName>
    </alternativeName>
</protein>
<reference key="1">
    <citation type="journal article" date="2006" name="Proc. Natl. Acad. Sci. U.S.A.">
        <title>Comparative genomics of the lactic acid bacteria.</title>
        <authorList>
            <person name="Makarova K.S."/>
            <person name="Slesarev A."/>
            <person name="Wolf Y.I."/>
            <person name="Sorokin A."/>
            <person name="Mirkin B."/>
            <person name="Koonin E.V."/>
            <person name="Pavlov A."/>
            <person name="Pavlova N."/>
            <person name="Karamychev V."/>
            <person name="Polouchine N."/>
            <person name="Shakhova V."/>
            <person name="Grigoriev I."/>
            <person name="Lou Y."/>
            <person name="Rohksar D."/>
            <person name="Lucas S."/>
            <person name="Huang K."/>
            <person name="Goodstein D.M."/>
            <person name="Hawkins T."/>
            <person name="Plengvidhya V."/>
            <person name="Welker D."/>
            <person name="Hughes J."/>
            <person name="Goh Y."/>
            <person name="Benson A."/>
            <person name="Baldwin K."/>
            <person name="Lee J.-H."/>
            <person name="Diaz-Muniz I."/>
            <person name="Dosti B."/>
            <person name="Smeianov V."/>
            <person name="Wechter W."/>
            <person name="Barabote R."/>
            <person name="Lorca G."/>
            <person name="Altermann E."/>
            <person name="Barrangou R."/>
            <person name="Ganesan B."/>
            <person name="Xie Y."/>
            <person name="Rawsthorne H."/>
            <person name="Tamir D."/>
            <person name="Parker C."/>
            <person name="Breidt F."/>
            <person name="Broadbent J.R."/>
            <person name="Hutkins R."/>
            <person name="O'Sullivan D."/>
            <person name="Steele J."/>
            <person name="Unlu G."/>
            <person name="Saier M.H. Jr."/>
            <person name="Klaenhammer T."/>
            <person name="Richardson P."/>
            <person name="Kozyavkin S."/>
            <person name="Weimer B.C."/>
            <person name="Mills D.A."/>
        </authorList>
    </citation>
    <scope>NUCLEOTIDE SEQUENCE [LARGE SCALE GENOMIC DNA]</scope>
    <source>
        <strain>ATCC 8293 / DSM 20343 / BCRC 11652 / CCM 1803 / JCM 6124 / NCDO 523 / NBRC 100496 / NCIMB 8023 / NCTC 12954 / NRRL B-1118 / 37Y</strain>
    </source>
</reference>
<evidence type="ECO:0000255" key="1">
    <source>
        <dbReference type="HAMAP-Rule" id="MF_00238"/>
    </source>
</evidence>
<gene>
    <name evidence="1" type="primary">cmk</name>
    <name type="ordered locus">LEUM_1293</name>
</gene>
<name>KCY_LEUMM</name>
<organism>
    <name type="scientific">Leuconostoc mesenteroides subsp. mesenteroides (strain ATCC 8293 / DSM 20343 / BCRC 11652 / CCM 1803 / JCM 6124 / NCDO 523 / NBRC 100496 / NCIMB 8023 / NCTC 12954 / NRRL B-1118 / 37Y)</name>
    <dbReference type="NCBI Taxonomy" id="203120"/>
    <lineage>
        <taxon>Bacteria</taxon>
        <taxon>Bacillati</taxon>
        <taxon>Bacillota</taxon>
        <taxon>Bacilli</taxon>
        <taxon>Lactobacillales</taxon>
        <taxon>Lactobacillaceae</taxon>
        <taxon>Leuconostoc</taxon>
    </lineage>
</organism>
<keyword id="KW-0067">ATP-binding</keyword>
<keyword id="KW-0963">Cytoplasm</keyword>
<keyword id="KW-0418">Kinase</keyword>
<keyword id="KW-0547">Nucleotide-binding</keyword>
<keyword id="KW-1185">Reference proteome</keyword>
<keyword id="KW-0808">Transferase</keyword>